<organism>
    <name type="scientific">Porphyromonas gingivalis (strain ATCC 33277 / DSM 20709 / CIP 103683 / JCM 12257 / NCTC 11834 / 2561)</name>
    <dbReference type="NCBI Taxonomy" id="431947"/>
    <lineage>
        <taxon>Bacteria</taxon>
        <taxon>Pseudomonadati</taxon>
        <taxon>Bacteroidota</taxon>
        <taxon>Bacteroidia</taxon>
        <taxon>Bacteroidales</taxon>
        <taxon>Porphyromonadaceae</taxon>
        <taxon>Porphyromonas</taxon>
    </lineage>
</organism>
<reference key="1">
    <citation type="journal article" date="2008" name="DNA Res.">
        <title>Determination of the genome sequence of Porphyromonas gingivalis strain ATCC 33277 and genomic comparison with strain W83 revealed extensive genome rearrangements in P. gingivalis.</title>
        <authorList>
            <person name="Naito M."/>
            <person name="Hirakawa H."/>
            <person name="Yamashita A."/>
            <person name="Ohara N."/>
            <person name="Shoji M."/>
            <person name="Yukitake H."/>
            <person name="Nakayama K."/>
            <person name="Toh H."/>
            <person name="Yoshimura F."/>
            <person name="Kuhara S."/>
            <person name="Hattori M."/>
            <person name="Hayashi T."/>
            <person name="Nakayama K."/>
        </authorList>
    </citation>
    <scope>NUCLEOTIDE SEQUENCE [LARGE SCALE GENOMIC DNA]</scope>
    <source>
        <strain>ATCC 33277 / DSM 20709 / CIP 103683 / JCM 12257 / NCTC 11834 / 2561</strain>
    </source>
</reference>
<accession>B2RII9</accession>
<feature type="chain" id="PRO_1000096520" description="Triosephosphate isomerase">
    <location>
        <begin position="1"/>
        <end position="251"/>
    </location>
</feature>
<feature type="active site" description="Electrophile" evidence="1">
    <location>
        <position position="96"/>
    </location>
</feature>
<feature type="active site" description="Proton acceptor" evidence="1">
    <location>
        <position position="168"/>
    </location>
</feature>
<feature type="binding site" evidence="1">
    <location>
        <begin position="9"/>
        <end position="11"/>
    </location>
    <ligand>
        <name>substrate</name>
    </ligand>
</feature>
<feature type="binding site" evidence="1">
    <location>
        <position position="174"/>
    </location>
    <ligand>
        <name>substrate</name>
    </ligand>
</feature>
<feature type="binding site" evidence="1">
    <location>
        <position position="214"/>
    </location>
    <ligand>
        <name>substrate</name>
    </ligand>
</feature>
<feature type="binding site" evidence="1">
    <location>
        <begin position="235"/>
        <end position="236"/>
    </location>
    <ligand>
        <name>substrate</name>
    </ligand>
</feature>
<sequence>MRKNIVAGNWKMNKTLQEGLALAKELDAALKGRTISCDVIIGTPFIHLASIAAAIDTTRIGVAAENCADKESGAYTGEVSAAMVASTGARYVIIGHSERRAYYHETSPILMEKVKLALSNGLTPIFCVGEVLEEREAGKHFEVVARQVEEALFTLDQTDFAKLILAYEPVWAIGTGKTATADQAQEMHAHIRKSIAAKYGKEVANGCSILYGGSCNAANAKELFSRADVDGGLIGGASLSVDKFLPIIEAF</sequence>
<comment type="function">
    <text evidence="1">Involved in the gluconeogenesis. Catalyzes stereospecifically the conversion of dihydroxyacetone phosphate (DHAP) to D-glyceraldehyde-3-phosphate (G3P).</text>
</comment>
<comment type="catalytic activity">
    <reaction evidence="1">
        <text>D-glyceraldehyde 3-phosphate = dihydroxyacetone phosphate</text>
        <dbReference type="Rhea" id="RHEA:18585"/>
        <dbReference type="ChEBI" id="CHEBI:57642"/>
        <dbReference type="ChEBI" id="CHEBI:59776"/>
        <dbReference type="EC" id="5.3.1.1"/>
    </reaction>
</comment>
<comment type="pathway">
    <text evidence="1">Carbohydrate biosynthesis; gluconeogenesis.</text>
</comment>
<comment type="pathway">
    <text evidence="1">Carbohydrate degradation; glycolysis; D-glyceraldehyde 3-phosphate from glycerone phosphate: step 1/1.</text>
</comment>
<comment type="subunit">
    <text evidence="1">Homodimer.</text>
</comment>
<comment type="subcellular location">
    <subcellularLocation>
        <location evidence="1">Cytoplasm</location>
    </subcellularLocation>
</comment>
<comment type="similarity">
    <text evidence="1">Belongs to the triosephosphate isomerase family.</text>
</comment>
<dbReference type="EC" id="5.3.1.1" evidence="1"/>
<dbReference type="EMBL" id="AP009380">
    <property type="protein sequence ID" value="BAG33184.1"/>
    <property type="molecule type" value="Genomic_DNA"/>
</dbReference>
<dbReference type="RefSeq" id="WP_012457684.1">
    <property type="nucleotide sequence ID" value="NC_010729.1"/>
</dbReference>
<dbReference type="SMR" id="B2RII9"/>
<dbReference type="GeneID" id="29255888"/>
<dbReference type="KEGG" id="pgn:PGN_0665"/>
<dbReference type="eggNOG" id="COG0149">
    <property type="taxonomic scope" value="Bacteria"/>
</dbReference>
<dbReference type="HOGENOM" id="CLU_024251_2_3_10"/>
<dbReference type="OrthoDB" id="9809429at2"/>
<dbReference type="BioCyc" id="PGIN431947:G1G2V-730-MONOMER"/>
<dbReference type="UniPathway" id="UPA00109">
    <property type="reaction ID" value="UER00189"/>
</dbReference>
<dbReference type="UniPathway" id="UPA00138"/>
<dbReference type="Proteomes" id="UP000008842">
    <property type="component" value="Chromosome"/>
</dbReference>
<dbReference type="GO" id="GO:0005829">
    <property type="term" value="C:cytosol"/>
    <property type="evidence" value="ECO:0007669"/>
    <property type="project" value="TreeGrafter"/>
</dbReference>
<dbReference type="GO" id="GO:0004807">
    <property type="term" value="F:triose-phosphate isomerase activity"/>
    <property type="evidence" value="ECO:0007669"/>
    <property type="project" value="UniProtKB-UniRule"/>
</dbReference>
<dbReference type="GO" id="GO:0006094">
    <property type="term" value="P:gluconeogenesis"/>
    <property type="evidence" value="ECO:0007669"/>
    <property type="project" value="UniProtKB-UniRule"/>
</dbReference>
<dbReference type="GO" id="GO:0046166">
    <property type="term" value="P:glyceraldehyde-3-phosphate biosynthetic process"/>
    <property type="evidence" value="ECO:0007669"/>
    <property type="project" value="TreeGrafter"/>
</dbReference>
<dbReference type="GO" id="GO:0019563">
    <property type="term" value="P:glycerol catabolic process"/>
    <property type="evidence" value="ECO:0007669"/>
    <property type="project" value="TreeGrafter"/>
</dbReference>
<dbReference type="GO" id="GO:0006096">
    <property type="term" value="P:glycolytic process"/>
    <property type="evidence" value="ECO:0007669"/>
    <property type="project" value="UniProtKB-UniRule"/>
</dbReference>
<dbReference type="CDD" id="cd00311">
    <property type="entry name" value="TIM"/>
    <property type="match status" value="1"/>
</dbReference>
<dbReference type="FunFam" id="3.20.20.70:FF:000016">
    <property type="entry name" value="Triosephosphate isomerase"/>
    <property type="match status" value="1"/>
</dbReference>
<dbReference type="Gene3D" id="3.20.20.70">
    <property type="entry name" value="Aldolase class I"/>
    <property type="match status" value="1"/>
</dbReference>
<dbReference type="HAMAP" id="MF_00147_B">
    <property type="entry name" value="TIM_B"/>
    <property type="match status" value="1"/>
</dbReference>
<dbReference type="InterPro" id="IPR013785">
    <property type="entry name" value="Aldolase_TIM"/>
</dbReference>
<dbReference type="InterPro" id="IPR035990">
    <property type="entry name" value="TIM_sf"/>
</dbReference>
<dbReference type="InterPro" id="IPR022896">
    <property type="entry name" value="TrioseP_Isoase_bac/euk"/>
</dbReference>
<dbReference type="InterPro" id="IPR000652">
    <property type="entry name" value="Triosephosphate_isomerase"/>
</dbReference>
<dbReference type="InterPro" id="IPR020861">
    <property type="entry name" value="Triosephosphate_isomerase_AS"/>
</dbReference>
<dbReference type="NCBIfam" id="TIGR00419">
    <property type="entry name" value="tim"/>
    <property type="match status" value="1"/>
</dbReference>
<dbReference type="PANTHER" id="PTHR21139">
    <property type="entry name" value="TRIOSEPHOSPHATE ISOMERASE"/>
    <property type="match status" value="1"/>
</dbReference>
<dbReference type="PANTHER" id="PTHR21139:SF42">
    <property type="entry name" value="TRIOSEPHOSPHATE ISOMERASE"/>
    <property type="match status" value="1"/>
</dbReference>
<dbReference type="Pfam" id="PF00121">
    <property type="entry name" value="TIM"/>
    <property type="match status" value="1"/>
</dbReference>
<dbReference type="SUPFAM" id="SSF51351">
    <property type="entry name" value="Triosephosphate isomerase (TIM)"/>
    <property type="match status" value="1"/>
</dbReference>
<dbReference type="PROSITE" id="PS00171">
    <property type="entry name" value="TIM_1"/>
    <property type="match status" value="1"/>
</dbReference>
<dbReference type="PROSITE" id="PS51440">
    <property type="entry name" value="TIM_2"/>
    <property type="match status" value="1"/>
</dbReference>
<evidence type="ECO:0000255" key="1">
    <source>
        <dbReference type="HAMAP-Rule" id="MF_00147"/>
    </source>
</evidence>
<keyword id="KW-0963">Cytoplasm</keyword>
<keyword id="KW-0312">Gluconeogenesis</keyword>
<keyword id="KW-0324">Glycolysis</keyword>
<keyword id="KW-0413">Isomerase</keyword>
<protein>
    <recommendedName>
        <fullName evidence="1">Triosephosphate isomerase</fullName>
        <shortName evidence="1">TIM</shortName>
        <shortName evidence="1">TPI</shortName>
        <ecNumber evidence="1">5.3.1.1</ecNumber>
    </recommendedName>
    <alternativeName>
        <fullName evidence="1">Triose-phosphate isomerase</fullName>
    </alternativeName>
</protein>
<name>TPIS_PORG3</name>
<gene>
    <name evidence="1" type="primary">tpiA</name>
    <name type="ordered locus">PGN_0665</name>
</gene>
<proteinExistence type="inferred from homology"/>